<keyword id="KW-0539">Nucleus</keyword>
<keyword id="KW-1185">Reference proteome</keyword>
<reference key="1">
    <citation type="journal article" date="2010" name="Proc. Natl. Acad. Sci. U.S.A.">
        <title>Insights into evolution of multicellular fungi from the assembled chromosomes of the mushroom Coprinopsis cinerea (Coprinus cinereus).</title>
        <authorList>
            <person name="Stajich J.E."/>
            <person name="Wilke S.K."/>
            <person name="Ahren D."/>
            <person name="Au C.H."/>
            <person name="Birren B.W."/>
            <person name="Borodovsky M."/>
            <person name="Burns C."/>
            <person name="Canbaeck B."/>
            <person name="Casselton L.A."/>
            <person name="Cheng C.K."/>
            <person name="Deng J."/>
            <person name="Dietrich F.S."/>
            <person name="Fargo D.C."/>
            <person name="Farman M.L."/>
            <person name="Gathman A.C."/>
            <person name="Goldberg J."/>
            <person name="Guigo R."/>
            <person name="Hoegger P.J."/>
            <person name="Hooker J.B."/>
            <person name="Huggins A."/>
            <person name="James T.Y."/>
            <person name="Kamada T."/>
            <person name="Kilaru S."/>
            <person name="Kodira C."/>
            <person name="Kuees U."/>
            <person name="Kupfer D."/>
            <person name="Kwan H.S."/>
            <person name="Lomsadze A."/>
            <person name="Li W."/>
            <person name="Lilly W.W."/>
            <person name="Ma L.-J."/>
            <person name="Mackey A.J."/>
            <person name="Manning G."/>
            <person name="Martin F."/>
            <person name="Muraguchi H."/>
            <person name="Natvig D.O."/>
            <person name="Palmerini H."/>
            <person name="Ramesh M.A."/>
            <person name="Rehmeyer C.J."/>
            <person name="Roe B.A."/>
            <person name="Shenoy N."/>
            <person name="Stanke M."/>
            <person name="Ter-Hovhannisyan V."/>
            <person name="Tunlid A."/>
            <person name="Velagapudi R."/>
            <person name="Vision T.J."/>
            <person name="Zeng Q."/>
            <person name="Zolan M.E."/>
            <person name="Pukkila P.J."/>
        </authorList>
    </citation>
    <scope>NUCLEOTIDE SEQUENCE [LARGE SCALE GENOMIC DNA]</scope>
    <source>
        <strain>Okayama-7 / 130 / ATCC MYA-4618 / FGSC 9003</strain>
    </source>
</reference>
<sequence length="175" mass="19173">MSRTATAAGPSTSAPNDGSRTITITNVPTNEGGDDIIPEEDGPVGTLRLRAARTRTGPRVTWDEDVVDNEHAGKKKSKICCIFRPTRDFGESSSSDSDSDSSCDHDHDREEGPSGEGSSSNRPRQGPMQIHDCCDSDDDKNAYERLPSYQRKKIKAKRRAGRFSSLYESQDAHTL</sequence>
<proteinExistence type="inferred from homology"/>
<evidence type="ECO:0000250" key="1"/>
<evidence type="ECO:0000256" key="2">
    <source>
        <dbReference type="SAM" id="MobiDB-lite"/>
    </source>
</evidence>
<evidence type="ECO:0000305" key="3"/>
<gene>
    <name type="primary">YPI1</name>
    <name type="ORF">CC1G_12398</name>
</gene>
<dbReference type="EMBL" id="AACS02000004">
    <property type="protein sequence ID" value="EAU83337.2"/>
    <property type="status" value="ALT_SEQ"/>
    <property type="molecule type" value="Genomic_DNA"/>
</dbReference>
<dbReference type="RefSeq" id="XP_001838474.2">
    <property type="nucleotide sequence ID" value="XM_001838422.2"/>
</dbReference>
<dbReference type="STRING" id="240176.A8P353"/>
<dbReference type="GeneID" id="6015074"/>
<dbReference type="KEGG" id="cci:CC1G_12398"/>
<dbReference type="eggNOG" id="KOG4102">
    <property type="taxonomic scope" value="Eukaryota"/>
</dbReference>
<dbReference type="HOGENOM" id="CLU_098333_0_2_1"/>
<dbReference type="InParanoid" id="A8P353"/>
<dbReference type="OrthoDB" id="307488at2759"/>
<dbReference type="Proteomes" id="UP000001861">
    <property type="component" value="Unassembled WGS sequence"/>
</dbReference>
<dbReference type="GO" id="GO:0005634">
    <property type="term" value="C:nucleus"/>
    <property type="evidence" value="ECO:0007669"/>
    <property type="project" value="UniProtKB-SubCell"/>
</dbReference>
<dbReference type="GO" id="GO:0008157">
    <property type="term" value="F:protein phosphatase 1 binding"/>
    <property type="evidence" value="ECO:0007669"/>
    <property type="project" value="TreeGrafter"/>
</dbReference>
<dbReference type="GO" id="GO:0004865">
    <property type="term" value="F:protein serine/threonine phosphatase inhibitor activity"/>
    <property type="evidence" value="ECO:0007669"/>
    <property type="project" value="InterPro"/>
</dbReference>
<dbReference type="InterPro" id="IPR011107">
    <property type="entry name" value="PPI_Ypi1"/>
</dbReference>
<dbReference type="PANTHER" id="PTHR20835:SF0">
    <property type="entry name" value="E3 UBIQUITIN-PROTEIN LIGASE PPP1R11"/>
    <property type="match status" value="1"/>
</dbReference>
<dbReference type="PANTHER" id="PTHR20835">
    <property type="entry name" value="E3 UBIQUITIN-PROTEIN LIGASE PPP1R11-RELATED"/>
    <property type="match status" value="1"/>
</dbReference>
<dbReference type="Pfam" id="PF07491">
    <property type="entry name" value="PPI_Ypi1"/>
    <property type="match status" value="1"/>
</dbReference>
<organism>
    <name type="scientific">Coprinopsis cinerea (strain Okayama-7 / 130 / ATCC MYA-4618 / FGSC 9003)</name>
    <name type="common">Inky cap fungus</name>
    <name type="synonym">Hormographiella aspergillata</name>
    <dbReference type="NCBI Taxonomy" id="240176"/>
    <lineage>
        <taxon>Eukaryota</taxon>
        <taxon>Fungi</taxon>
        <taxon>Dikarya</taxon>
        <taxon>Basidiomycota</taxon>
        <taxon>Agaricomycotina</taxon>
        <taxon>Agaricomycetes</taxon>
        <taxon>Agaricomycetidae</taxon>
        <taxon>Agaricales</taxon>
        <taxon>Agaricineae</taxon>
        <taxon>Psathyrellaceae</taxon>
        <taxon>Coprinopsis</taxon>
    </lineage>
</organism>
<accession>A8P353</accession>
<comment type="function">
    <text evidence="1">Regulator of type 1 phosphatases which maintains protein phosphatase activity under strict control.</text>
</comment>
<comment type="subcellular location">
    <subcellularLocation>
        <location evidence="1">Nucleus</location>
    </subcellularLocation>
</comment>
<comment type="similarity">
    <text evidence="3">Belongs to the YPI1 family.</text>
</comment>
<comment type="sequence caution" evidence="3">
    <conflict type="erroneous gene model prediction">
        <sequence resource="EMBL-CDS" id="EAU83337"/>
    </conflict>
</comment>
<protein>
    <recommendedName>
        <fullName>Type 1 phosphatases regulator YPI1</fullName>
    </recommendedName>
</protein>
<name>YPI1_COPC7</name>
<feature type="chain" id="PRO_0000333474" description="Type 1 phosphatases regulator YPI1">
    <location>
        <begin position="1"/>
        <end position="175"/>
    </location>
</feature>
<feature type="region of interest" description="Disordered" evidence="2">
    <location>
        <begin position="1"/>
        <end position="74"/>
    </location>
</feature>
<feature type="region of interest" description="Disordered" evidence="2">
    <location>
        <begin position="88"/>
        <end position="175"/>
    </location>
</feature>
<feature type="compositionally biased region" description="Low complexity" evidence="2">
    <location>
        <begin position="1"/>
        <end position="15"/>
    </location>
</feature>
<feature type="compositionally biased region" description="Polar residues" evidence="2">
    <location>
        <begin position="16"/>
        <end position="29"/>
    </location>
</feature>
<feature type="compositionally biased region" description="Acidic residues" evidence="2">
    <location>
        <begin position="32"/>
        <end position="42"/>
    </location>
</feature>
<feature type="compositionally biased region" description="Basic and acidic residues" evidence="2">
    <location>
        <begin position="102"/>
        <end position="112"/>
    </location>
</feature>
<feature type="compositionally biased region" description="Basic residues" evidence="2">
    <location>
        <begin position="150"/>
        <end position="161"/>
    </location>
</feature>